<reference key="1">
    <citation type="submission" date="2001-11" db="EMBL/GenBank/DDBJ databases">
        <title>Arabidopsis thaliana transcription factor WRKY65.</title>
        <authorList>
            <person name="Kushnir S."/>
            <person name="Ulker B."/>
            <person name="Somssich I.E."/>
        </authorList>
    </citation>
    <scope>NUCLEOTIDE SEQUENCE [MRNA]</scope>
    <source>
        <strain>cv. Columbia</strain>
        <tissue>Flower</tissue>
    </source>
</reference>
<reference key="2">
    <citation type="journal article" date="2000" name="Nature">
        <title>Sequence and analysis of chromosome 1 of the plant Arabidopsis thaliana.</title>
        <authorList>
            <person name="Theologis A."/>
            <person name="Ecker J.R."/>
            <person name="Palm C.J."/>
            <person name="Federspiel N.A."/>
            <person name="Kaul S."/>
            <person name="White O."/>
            <person name="Alonso J."/>
            <person name="Altafi H."/>
            <person name="Araujo R."/>
            <person name="Bowman C.L."/>
            <person name="Brooks S.Y."/>
            <person name="Buehler E."/>
            <person name="Chan A."/>
            <person name="Chao Q."/>
            <person name="Chen H."/>
            <person name="Cheuk R.F."/>
            <person name="Chin C.W."/>
            <person name="Chung M.K."/>
            <person name="Conn L."/>
            <person name="Conway A.B."/>
            <person name="Conway A.R."/>
            <person name="Creasy T.H."/>
            <person name="Dewar K."/>
            <person name="Dunn P."/>
            <person name="Etgu P."/>
            <person name="Feldblyum T.V."/>
            <person name="Feng J.-D."/>
            <person name="Fong B."/>
            <person name="Fujii C.Y."/>
            <person name="Gill J.E."/>
            <person name="Goldsmith A.D."/>
            <person name="Haas B."/>
            <person name="Hansen N.F."/>
            <person name="Hughes B."/>
            <person name="Huizar L."/>
            <person name="Hunter J.L."/>
            <person name="Jenkins J."/>
            <person name="Johnson-Hopson C."/>
            <person name="Khan S."/>
            <person name="Khaykin E."/>
            <person name="Kim C.J."/>
            <person name="Koo H.L."/>
            <person name="Kremenetskaia I."/>
            <person name="Kurtz D.B."/>
            <person name="Kwan A."/>
            <person name="Lam B."/>
            <person name="Langin-Hooper S."/>
            <person name="Lee A."/>
            <person name="Lee J.M."/>
            <person name="Lenz C.A."/>
            <person name="Li J.H."/>
            <person name="Li Y.-P."/>
            <person name="Lin X."/>
            <person name="Liu S.X."/>
            <person name="Liu Z.A."/>
            <person name="Luros J.S."/>
            <person name="Maiti R."/>
            <person name="Marziali A."/>
            <person name="Militscher J."/>
            <person name="Miranda M."/>
            <person name="Nguyen M."/>
            <person name="Nierman W.C."/>
            <person name="Osborne B.I."/>
            <person name="Pai G."/>
            <person name="Peterson J."/>
            <person name="Pham P.K."/>
            <person name="Rizzo M."/>
            <person name="Rooney T."/>
            <person name="Rowley D."/>
            <person name="Sakano H."/>
            <person name="Salzberg S.L."/>
            <person name="Schwartz J.R."/>
            <person name="Shinn P."/>
            <person name="Southwick A.M."/>
            <person name="Sun H."/>
            <person name="Tallon L.J."/>
            <person name="Tambunga G."/>
            <person name="Toriumi M.J."/>
            <person name="Town C.D."/>
            <person name="Utterback T."/>
            <person name="Van Aken S."/>
            <person name="Vaysberg M."/>
            <person name="Vysotskaia V.S."/>
            <person name="Walker M."/>
            <person name="Wu D."/>
            <person name="Yu G."/>
            <person name="Fraser C.M."/>
            <person name="Venter J.C."/>
            <person name="Davis R.W."/>
        </authorList>
    </citation>
    <scope>NUCLEOTIDE SEQUENCE [LARGE SCALE GENOMIC DNA]</scope>
    <source>
        <strain>cv. Columbia</strain>
    </source>
</reference>
<reference key="3">
    <citation type="journal article" date="2017" name="Plant J.">
        <title>Araport11: a complete reannotation of the Arabidopsis thaliana reference genome.</title>
        <authorList>
            <person name="Cheng C.Y."/>
            <person name="Krishnakumar V."/>
            <person name="Chan A.P."/>
            <person name="Thibaud-Nissen F."/>
            <person name="Schobel S."/>
            <person name="Town C.D."/>
        </authorList>
    </citation>
    <scope>GENOME REANNOTATION</scope>
    <source>
        <strain>cv. Columbia</strain>
    </source>
</reference>
<keyword id="KW-0238">DNA-binding</keyword>
<keyword id="KW-0539">Nucleus</keyword>
<keyword id="KW-1185">Reference proteome</keyword>
<keyword id="KW-0804">Transcription</keyword>
<keyword id="KW-0805">Transcription regulation</keyword>
<sequence>MKRGLDMARSYNDHESSQETGPESPNSSTFNGMKALISSHSPKRSRRSVEKRVVNVPMKEMEGSRHKGDTTPPSDSWAWRKYGQKPIKGSPYPRGYYRCSSTKGCPARKQVERSRDDPTMILITYTSEHNHPWPLTSSTRNGPKPKPEPKPEPEPEVEPEAEEEDNKFMVLGRGIETTPSCVDEFAWFTEMETTSSTILESPIFSSEKKTAVSGADDVAVFFPMGEEDESLFADLGELPECSVVFRHRSSVVGSQVEIF</sequence>
<feature type="chain" id="PRO_0000133706" description="Probable WRKY transcription factor 65">
    <location>
        <begin position="1"/>
        <end position="259"/>
    </location>
</feature>
<feature type="DNA-binding region" description="WRKY" evidence="2">
    <location>
        <begin position="68"/>
        <end position="134"/>
    </location>
</feature>
<feature type="region of interest" description="Disordered" evidence="3">
    <location>
        <begin position="1"/>
        <end position="101"/>
    </location>
</feature>
<feature type="region of interest" description="Disordered" evidence="3">
    <location>
        <begin position="126"/>
        <end position="165"/>
    </location>
</feature>
<feature type="compositionally biased region" description="Basic and acidic residues" evidence="3">
    <location>
        <begin position="1"/>
        <end position="17"/>
    </location>
</feature>
<feature type="compositionally biased region" description="Polar residues" evidence="3">
    <location>
        <begin position="18"/>
        <end position="31"/>
    </location>
</feature>
<feature type="compositionally biased region" description="Basic and acidic residues" evidence="3">
    <location>
        <begin position="47"/>
        <end position="69"/>
    </location>
</feature>
<feature type="compositionally biased region" description="Acidic residues" evidence="3">
    <location>
        <begin position="154"/>
        <end position="165"/>
    </location>
</feature>
<evidence type="ECO:0000250" key="1"/>
<evidence type="ECO:0000255" key="2">
    <source>
        <dbReference type="PROSITE-ProRule" id="PRU00223"/>
    </source>
</evidence>
<evidence type="ECO:0000256" key="3">
    <source>
        <dbReference type="SAM" id="MobiDB-lite"/>
    </source>
</evidence>
<accession>Q9LP56</accession>
<proteinExistence type="evidence at transcript level"/>
<dbReference type="EMBL" id="AF452173">
    <property type="protein sequence ID" value="AAL50783.1"/>
    <property type="molecule type" value="mRNA"/>
</dbReference>
<dbReference type="EMBL" id="AC021043">
    <property type="protein sequence ID" value="AAF88112.1"/>
    <property type="molecule type" value="Genomic_DNA"/>
</dbReference>
<dbReference type="EMBL" id="CP002684">
    <property type="protein sequence ID" value="AEE31068.1"/>
    <property type="molecule type" value="Genomic_DNA"/>
</dbReference>
<dbReference type="PIR" id="D86415">
    <property type="entry name" value="D86415"/>
</dbReference>
<dbReference type="RefSeq" id="NP_174222.2">
    <property type="nucleotide sequence ID" value="NM_102668.4"/>
</dbReference>
<dbReference type="SMR" id="Q9LP56"/>
<dbReference type="BioGRID" id="25037">
    <property type="interactions" value="1"/>
</dbReference>
<dbReference type="FunCoup" id="Q9LP56">
    <property type="interactions" value="148"/>
</dbReference>
<dbReference type="STRING" id="3702.Q9LP56"/>
<dbReference type="PaxDb" id="3702-AT1G29280.1"/>
<dbReference type="ProteomicsDB" id="234273"/>
<dbReference type="EnsemblPlants" id="AT1G29280.1">
    <property type="protein sequence ID" value="AT1G29280.1"/>
    <property type="gene ID" value="AT1G29280"/>
</dbReference>
<dbReference type="GeneID" id="839802"/>
<dbReference type="Gramene" id="AT1G29280.1">
    <property type="protein sequence ID" value="AT1G29280.1"/>
    <property type="gene ID" value="AT1G29280"/>
</dbReference>
<dbReference type="KEGG" id="ath:AT1G29280"/>
<dbReference type="Araport" id="AT1G29280"/>
<dbReference type="TAIR" id="AT1G29280">
    <property type="gene designation" value="WRKY65"/>
</dbReference>
<dbReference type="eggNOG" id="ENOG502QR9A">
    <property type="taxonomic scope" value="Eukaryota"/>
</dbReference>
<dbReference type="HOGENOM" id="CLU_079187_0_0_1"/>
<dbReference type="InParanoid" id="Q9LP56"/>
<dbReference type="OMA" id="WFTEMET"/>
<dbReference type="OrthoDB" id="773436at2759"/>
<dbReference type="PhylomeDB" id="Q9LP56"/>
<dbReference type="PRO" id="PR:Q9LP56"/>
<dbReference type="Proteomes" id="UP000006548">
    <property type="component" value="Chromosome 1"/>
</dbReference>
<dbReference type="ExpressionAtlas" id="Q9LP56">
    <property type="expression patterns" value="baseline and differential"/>
</dbReference>
<dbReference type="GO" id="GO:0005634">
    <property type="term" value="C:nucleus"/>
    <property type="evidence" value="ECO:0007669"/>
    <property type="project" value="UniProtKB-SubCell"/>
</dbReference>
<dbReference type="GO" id="GO:0003700">
    <property type="term" value="F:DNA-binding transcription factor activity"/>
    <property type="evidence" value="ECO:0000250"/>
    <property type="project" value="TAIR"/>
</dbReference>
<dbReference type="GO" id="GO:0000976">
    <property type="term" value="F:transcription cis-regulatory region binding"/>
    <property type="evidence" value="ECO:0000353"/>
    <property type="project" value="TAIR"/>
</dbReference>
<dbReference type="FunFam" id="2.20.25.80:FF:000004">
    <property type="entry name" value="WRKY transcription factor 65"/>
    <property type="match status" value="1"/>
</dbReference>
<dbReference type="Gene3D" id="2.20.25.80">
    <property type="entry name" value="WRKY domain"/>
    <property type="match status" value="1"/>
</dbReference>
<dbReference type="InterPro" id="IPR003657">
    <property type="entry name" value="WRKY_dom"/>
</dbReference>
<dbReference type="InterPro" id="IPR036576">
    <property type="entry name" value="WRKY_dom_sf"/>
</dbReference>
<dbReference type="InterPro" id="IPR044810">
    <property type="entry name" value="WRKY_plant"/>
</dbReference>
<dbReference type="PANTHER" id="PTHR32096">
    <property type="entry name" value="WRKY TRANSCRIPTION FACTOR 30-RELATED-RELATED"/>
    <property type="match status" value="1"/>
</dbReference>
<dbReference type="PANTHER" id="PTHR32096:SF148">
    <property type="entry name" value="WRKY TRANSCRIPTION FACTOR 65 ISOFORM X1-RELATED"/>
    <property type="match status" value="1"/>
</dbReference>
<dbReference type="Pfam" id="PF03106">
    <property type="entry name" value="WRKY"/>
    <property type="match status" value="1"/>
</dbReference>
<dbReference type="SMART" id="SM00774">
    <property type="entry name" value="WRKY"/>
    <property type="match status" value="1"/>
</dbReference>
<dbReference type="SUPFAM" id="SSF118290">
    <property type="entry name" value="WRKY DNA-binding domain"/>
    <property type="match status" value="1"/>
</dbReference>
<dbReference type="PROSITE" id="PS50811">
    <property type="entry name" value="WRKY"/>
    <property type="match status" value="1"/>
</dbReference>
<organism>
    <name type="scientific">Arabidopsis thaliana</name>
    <name type="common">Mouse-ear cress</name>
    <dbReference type="NCBI Taxonomy" id="3702"/>
    <lineage>
        <taxon>Eukaryota</taxon>
        <taxon>Viridiplantae</taxon>
        <taxon>Streptophyta</taxon>
        <taxon>Embryophyta</taxon>
        <taxon>Tracheophyta</taxon>
        <taxon>Spermatophyta</taxon>
        <taxon>Magnoliopsida</taxon>
        <taxon>eudicotyledons</taxon>
        <taxon>Gunneridae</taxon>
        <taxon>Pentapetalae</taxon>
        <taxon>rosids</taxon>
        <taxon>malvids</taxon>
        <taxon>Brassicales</taxon>
        <taxon>Brassicaceae</taxon>
        <taxon>Camelineae</taxon>
        <taxon>Arabidopsis</taxon>
    </lineage>
</organism>
<gene>
    <name type="primary">WRKY65</name>
    <name type="ordered locus">At1g29280</name>
    <name type="ORF">F28N24.4</name>
</gene>
<protein>
    <recommendedName>
        <fullName>Probable WRKY transcription factor 65</fullName>
    </recommendedName>
    <alternativeName>
        <fullName>WRKY DNA-binding protein 65</fullName>
    </alternativeName>
</protein>
<name>WRK65_ARATH</name>
<comment type="function">
    <text evidence="1">Transcription factor. Interacts specifically with the W box (5'-(T)TGAC[CT]-3'), a frequently occurring elicitor-responsive cis-acting element (By similarity).</text>
</comment>
<comment type="subcellular location">
    <subcellularLocation>
        <location evidence="2">Nucleus</location>
    </subcellularLocation>
</comment>